<dbReference type="EMBL" id="AC134684">
    <property type="status" value="NOT_ANNOTATED_CDS"/>
    <property type="molecule type" value="Genomic_DNA"/>
</dbReference>
<dbReference type="CCDS" id="CCDS64820.1"/>
<dbReference type="RefSeq" id="NP_001269407.1">
    <property type="nucleotide sequence ID" value="NM_001282478.1"/>
</dbReference>
<dbReference type="RefSeq" id="NP_001269408.1">
    <property type="nucleotide sequence ID" value="NM_001282479.1"/>
</dbReference>
<dbReference type="RefSeq" id="XP_011533018.1">
    <property type="nucleotide sequence ID" value="XM_011534716.4"/>
</dbReference>
<dbReference type="RefSeq" id="XP_011542113.1">
    <property type="nucleotide sequence ID" value="XM_011543811.2"/>
</dbReference>
<dbReference type="RefSeq" id="XP_054184688.1">
    <property type="nucleotide sequence ID" value="XM_054328713.1"/>
</dbReference>
<dbReference type="BioGRID" id="935384">
    <property type="interactions" value="1"/>
</dbReference>
<dbReference type="BioGRID" id="936210">
    <property type="interactions" value="1"/>
</dbReference>
<dbReference type="FunCoup" id="E9PI22">
    <property type="interactions" value="1"/>
</dbReference>
<dbReference type="IntAct" id="E9PI22">
    <property type="interactions" value="1"/>
</dbReference>
<dbReference type="STRING" id="9606.ENSP00000436580"/>
<dbReference type="GlyGen" id="E9PI22">
    <property type="glycosylation" value="1 site"/>
</dbReference>
<dbReference type="BioMuta" id="PRR23D1"/>
<dbReference type="PaxDb" id="9606-ENSP00000436580"/>
<dbReference type="DNASU" id="100131608"/>
<dbReference type="Ensembl" id="ENST00000533250.2">
    <property type="protein sequence ID" value="ENSP00000436891.1"/>
    <property type="gene ID" value="ENSG00000255251.2"/>
</dbReference>
<dbReference type="Ensembl" id="ENST00000610320.2">
    <property type="protein sequence ID" value="ENSP00000480164.1"/>
    <property type="gene ID" value="ENSG00000274540.2"/>
</dbReference>
<dbReference type="Ensembl" id="ENST00000647089.1">
    <property type="protein sequence ID" value="ENSP00000496128.1"/>
    <property type="gene ID" value="ENSG00000284870.1"/>
</dbReference>
<dbReference type="GeneID" id="100131608"/>
<dbReference type="GeneID" id="100133251"/>
<dbReference type="KEGG" id="hsa:100131608"/>
<dbReference type="KEGG" id="hsa:100133251"/>
<dbReference type="MANE-Select" id="ENST00000533250.2">
    <property type="protein sequence ID" value="ENSP00000436891.1"/>
    <property type="RefSeq nucleotide sequence ID" value="NM_001282479.1"/>
    <property type="RefSeq protein sequence ID" value="NP_001269408.1"/>
</dbReference>
<dbReference type="AGR" id="HGNC:49396"/>
<dbReference type="AGR" id="HGNC:49420"/>
<dbReference type="CTD" id="100131608"/>
<dbReference type="CTD" id="100133251"/>
<dbReference type="GeneCards" id="PRR23D1"/>
<dbReference type="HGNC" id="HGNC:49420">
    <property type="gene designation" value="PRR23D1"/>
</dbReference>
<dbReference type="HPA" id="ENSG00000255251">
    <property type="expression patterns" value="Tissue enriched (epididymis)"/>
</dbReference>
<dbReference type="neXtProt" id="NX_E9PI22"/>
<dbReference type="VEuPathDB" id="HostDB:ENSG00000255251"/>
<dbReference type="eggNOG" id="ENOG502TEGA">
    <property type="taxonomic scope" value="Eukaryota"/>
</dbReference>
<dbReference type="HOGENOM" id="CLU_1207244_0_0_1"/>
<dbReference type="InParanoid" id="E9PI22"/>
<dbReference type="OMA" id="MIPPANH"/>
<dbReference type="OrthoDB" id="9809683at2759"/>
<dbReference type="PAN-GO" id="E9PI22">
    <property type="GO annotations" value="0 GO annotations based on evolutionary models"/>
</dbReference>
<dbReference type="PhylomeDB" id="E9PI22"/>
<dbReference type="SignaLink" id="E9PI22"/>
<dbReference type="BioGRID-ORCS" id="100131608">
    <property type="hits" value="21 hits in 509 CRISPR screens"/>
</dbReference>
<dbReference type="BioGRID-ORCS" id="100133251">
    <property type="hits" value="7 hits in 867 CRISPR screens"/>
</dbReference>
<dbReference type="Pharos" id="E9PI22">
    <property type="development level" value="Tdark"/>
</dbReference>
<dbReference type="PRO" id="PR:E9PI22"/>
<dbReference type="Proteomes" id="UP000005640">
    <property type="component" value="Chromosome 8"/>
</dbReference>
<dbReference type="RNAct" id="E9PI22">
    <property type="molecule type" value="protein"/>
</dbReference>
<dbReference type="Bgee" id="ENSG00000255251">
    <property type="expression patterns" value="Expressed in male germ line stem cell (sensu Vertebrata) in testis and 15 other cell types or tissues"/>
</dbReference>
<dbReference type="InterPro" id="IPR018903">
    <property type="entry name" value="PRR23"/>
</dbReference>
<dbReference type="PANTHER" id="PTHR31813">
    <property type="entry name" value="PROLINE-RICH PROTEIN 23B"/>
    <property type="match status" value="1"/>
</dbReference>
<dbReference type="PANTHER" id="PTHR31813:SF3">
    <property type="entry name" value="PROLINE-RICH PROTEIN 23D1-RELATED"/>
    <property type="match status" value="1"/>
</dbReference>
<dbReference type="Pfam" id="PF10630">
    <property type="entry name" value="DUF2476"/>
    <property type="match status" value="1"/>
</dbReference>
<keyword id="KW-1185">Reference proteome</keyword>
<sequence>MYGYRRLRSPRDSQTEPQNDNEGETSLATTQMNPPKRRQVEQGPSTGAKKPSISGAPHLNSYQSLELPQNQQDSGTEELMIVLEQGTEVRLSLEEVILILAPETVLQLTLENTVLVIVPEHVLRSEDGLQSPVQIQYIIPSVDDFSLEFHAQDGDISDMRRENVPFSPAEEGKAAPLYQQPLMIPQANHMAGISPSFLVTPLCIPRCRAAFPQCYPLPPTPSPVGRPRPADSSFSLHGMELLCTSSLRPMPPSPSPGPQVYHRVHHRPPSRARRCLFRK</sequence>
<name>P23D1_HUMAN</name>
<protein>
    <recommendedName>
        <fullName>Proline-rich protein 23D1</fullName>
    </recommendedName>
</protein>
<evidence type="ECO:0000256" key="1">
    <source>
        <dbReference type="SAM" id="MobiDB-lite"/>
    </source>
</evidence>
<evidence type="ECO:0000305" key="2"/>
<organism>
    <name type="scientific">Homo sapiens</name>
    <name type="common">Human</name>
    <dbReference type="NCBI Taxonomy" id="9606"/>
    <lineage>
        <taxon>Eukaryota</taxon>
        <taxon>Metazoa</taxon>
        <taxon>Chordata</taxon>
        <taxon>Craniata</taxon>
        <taxon>Vertebrata</taxon>
        <taxon>Euteleostomi</taxon>
        <taxon>Mammalia</taxon>
        <taxon>Eutheria</taxon>
        <taxon>Euarchontoglires</taxon>
        <taxon>Primates</taxon>
        <taxon>Haplorrhini</taxon>
        <taxon>Catarrhini</taxon>
        <taxon>Hominidae</taxon>
        <taxon>Homo</taxon>
    </lineage>
</organism>
<comment type="interaction">
    <interactant intactId="EBI-23335840">
        <id>E9PI22</id>
    </interactant>
    <interactant intactId="EBI-10220600">
        <id>Q8NA54</id>
        <label>IQUB</label>
    </interactant>
    <organismsDiffer>false</organismsDiffer>
    <experiments>3</experiments>
</comment>
<comment type="similarity">
    <text evidence="2">Belongs to the PRR23 family.</text>
</comment>
<gene>
    <name type="primary">PRR23D1</name>
</gene>
<accession>E9PI22</accession>
<feature type="chain" id="PRO_0000425121" description="Proline-rich protein 23D1">
    <location>
        <begin position="1"/>
        <end position="279"/>
    </location>
</feature>
<feature type="region of interest" description="Disordered" evidence="1">
    <location>
        <begin position="1"/>
        <end position="60"/>
    </location>
</feature>
<feature type="region of interest" description="Disordered" evidence="1">
    <location>
        <begin position="247"/>
        <end position="270"/>
    </location>
</feature>
<feature type="compositionally biased region" description="Polar residues" evidence="1">
    <location>
        <begin position="15"/>
        <end position="33"/>
    </location>
</feature>
<reference key="1">
    <citation type="journal article" date="2006" name="Nature">
        <title>DNA sequence and analysis of human chromosome 8.</title>
        <authorList>
            <person name="Nusbaum C."/>
            <person name="Mikkelsen T.S."/>
            <person name="Zody M.C."/>
            <person name="Asakawa S."/>
            <person name="Taudien S."/>
            <person name="Garber M."/>
            <person name="Kodira C.D."/>
            <person name="Schueler M.G."/>
            <person name="Shimizu A."/>
            <person name="Whittaker C.A."/>
            <person name="Chang J.L."/>
            <person name="Cuomo C.A."/>
            <person name="Dewar K."/>
            <person name="FitzGerald M.G."/>
            <person name="Yang X."/>
            <person name="Allen N.R."/>
            <person name="Anderson S."/>
            <person name="Asakawa T."/>
            <person name="Blechschmidt K."/>
            <person name="Bloom T."/>
            <person name="Borowsky M.L."/>
            <person name="Butler J."/>
            <person name="Cook A."/>
            <person name="Corum B."/>
            <person name="DeArellano K."/>
            <person name="DeCaprio D."/>
            <person name="Dooley K.T."/>
            <person name="Dorris L. III"/>
            <person name="Engels R."/>
            <person name="Gloeckner G."/>
            <person name="Hafez N."/>
            <person name="Hagopian D.S."/>
            <person name="Hall J.L."/>
            <person name="Ishikawa S.K."/>
            <person name="Jaffe D.B."/>
            <person name="Kamat A."/>
            <person name="Kudoh J."/>
            <person name="Lehmann R."/>
            <person name="Lokitsang T."/>
            <person name="Macdonald P."/>
            <person name="Major J.E."/>
            <person name="Matthews C.D."/>
            <person name="Mauceli E."/>
            <person name="Menzel U."/>
            <person name="Mihalev A.H."/>
            <person name="Minoshima S."/>
            <person name="Murayama Y."/>
            <person name="Naylor J.W."/>
            <person name="Nicol R."/>
            <person name="Nguyen C."/>
            <person name="O'Leary S.B."/>
            <person name="O'Neill K."/>
            <person name="Parker S.C.J."/>
            <person name="Polley A."/>
            <person name="Raymond C.K."/>
            <person name="Reichwald K."/>
            <person name="Rodriguez J."/>
            <person name="Sasaki T."/>
            <person name="Schilhabel M."/>
            <person name="Siddiqui R."/>
            <person name="Smith C.L."/>
            <person name="Sneddon T.P."/>
            <person name="Talamas J.A."/>
            <person name="Tenzin P."/>
            <person name="Topham K."/>
            <person name="Venkataraman V."/>
            <person name="Wen G."/>
            <person name="Yamazaki S."/>
            <person name="Young S.K."/>
            <person name="Zeng Q."/>
            <person name="Zimmer A.R."/>
            <person name="Rosenthal A."/>
            <person name="Birren B.W."/>
            <person name="Platzer M."/>
            <person name="Shimizu N."/>
            <person name="Lander E.S."/>
        </authorList>
    </citation>
    <scope>NUCLEOTIDE SEQUENCE [LARGE SCALE GENOMIC DNA]</scope>
</reference>
<proteinExistence type="evidence at protein level"/>